<evidence type="ECO:0000255" key="1">
    <source>
        <dbReference type="HAMAP-Rule" id="MF_01233"/>
    </source>
</evidence>
<evidence type="ECO:0000305" key="2"/>
<gene>
    <name evidence="1" type="primary">hdfR</name>
    <name type="ordered locus">SPA3735</name>
</gene>
<keyword id="KW-0238">DNA-binding</keyword>
<keyword id="KW-0678">Repressor</keyword>
<keyword id="KW-0804">Transcription</keyword>
<keyword id="KW-0805">Transcription regulation</keyword>
<proteinExistence type="inferred from homology"/>
<name>HDFR_SALPA</name>
<dbReference type="EMBL" id="CP000026">
    <property type="protein sequence ID" value="AAV79518.1"/>
    <property type="molecule type" value="Genomic_DNA"/>
</dbReference>
<dbReference type="SMR" id="Q5PJZ0"/>
<dbReference type="KEGG" id="spt:SPA3735"/>
<dbReference type="HOGENOM" id="CLU_039613_8_2_6"/>
<dbReference type="Proteomes" id="UP000008185">
    <property type="component" value="Chromosome"/>
</dbReference>
<dbReference type="GO" id="GO:0003677">
    <property type="term" value="F:DNA binding"/>
    <property type="evidence" value="ECO:0007669"/>
    <property type="project" value="UniProtKB-KW"/>
</dbReference>
<dbReference type="GO" id="GO:0003700">
    <property type="term" value="F:DNA-binding transcription factor activity"/>
    <property type="evidence" value="ECO:0007669"/>
    <property type="project" value="UniProtKB-UniRule"/>
</dbReference>
<dbReference type="GO" id="GO:0045892">
    <property type="term" value="P:negative regulation of DNA-templated transcription"/>
    <property type="evidence" value="ECO:0007669"/>
    <property type="project" value="UniProtKB-UniRule"/>
</dbReference>
<dbReference type="FunFam" id="1.10.10.10:FF:000001">
    <property type="entry name" value="LysR family transcriptional regulator"/>
    <property type="match status" value="1"/>
</dbReference>
<dbReference type="Gene3D" id="1.10.10.10">
    <property type="entry name" value="Winged helix-like DNA-binding domain superfamily/Winged helix DNA-binding domain"/>
    <property type="match status" value="1"/>
</dbReference>
<dbReference type="HAMAP" id="MF_01233">
    <property type="entry name" value="HTH_type_HdfR"/>
    <property type="match status" value="1"/>
</dbReference>
<dbReference type="InterPro" id="IPR050176">
    <property type="entry name" value="LTTR"/>
</dbReference>
<dbReference type="InterPro" id="IPR005119">
    <property type="entry name" value="LysR_subst-bd"/>
</dbReference>
<dbReference type="InterPro" id="IPR020890">
    <property type="entry name" value="Tscrpt_reg_HTH_HdfR"/>
</dbReference>
<dbReference type="InterPro" id="IPR000847">
    <property type="entry name" value="Tscrpt_reg_HTH_LysR"/>
</dbReference>
<dbReference type="InterPro" id="IPR036388">
    <property type="entry name" value="WH-like_DNA-bd_sf"/>
</dbReference>
<dbReference type="InterPro" id="IPR036390">
    <property type="entry name" value="WH_DNA-bd_sf"/>
</dbReference>
<dbReference type="NCBIfam" id="NF002946">
    <property type="entry name" value="PRK03601.1"/>
    <property type="match status" value="1"/>
</dbReference>
<dbReference type="PANTHER" id="PTHR30579:SF8">
    <property type="entry name" value="HTH-TYPE TRANSCRIPTIONAL REGULATOR HDFR"/>
    <property type="match status" value="1"/>
</dbReference>
<dbReference type="PANTHER" id="PTHR30579">
    <property type="entry name" value="TRANSCRIPTIONAL REGULATOR"/>
    <property type="match status" value="1"/>
</dbReference>
<dbReference type="Pfam" id="PF00126">
    <property type="entry name" value="HTH_1"/>
    <property type="match status" value="1"/>
</dbReference>
<dbReference type="Pfam" id="PF03466">
    <property type="entry name" value="LysR_substrate"/>
    <property type="match status" value="1"/>
</dbReference>
<dbReference type="PRINTS" id="PR00039">
    <property type="entry name" value="HTHLYSR"/>
</dbReference>
<dbReference type="SUPFAM" id="SSF53850">
    <property type="entry name" value="Periplasmic binding protein-like II"/>
    <property type="match status" value="1"/>
</dbReference>
<dbReference type="SUPFAM" id="SSF46785">
    <property type="entry name" value="Winged helix' DNA-binding domain"/>
    <property type="match status" value="1"/>
</dbReference>
<dbReference type="PROSITE" id="PS50931">
    <property type="entry name" value="HTH_LYSR"/>
    <property type="match status" value="1"/>
</dbReference>
<reference key="1">
    <citation type="journal article" date="2004" name="Nat. Genet.">
        <title>Comparison of genome degradation in Paratyphi A and Typhi, human-restricted serovars of Salmonella enterica that cause typhoid.</title>
        <authorList>
            <person name="McClelland M."/>
            <person name="Sanderson K.E."/>
            <person name="Clifton S.W."/>
            <person name="Latreille P."/>
            <person name="Porwollik S."/>
            <person name="Sabo A."/>
            <person name="Meyer R."/>
            <person name="Bieri T."/>
            <person name="Ozersky P."/>
            <person name="McLellan M."/>
            <person name="Harkins C.R."/>
            <person name="Wang C."/>
            <person name="Nguyen C."/>
            <person name="Berghoff A."/>
            <person name="Elliott G."/>
            <person name="Kohlberg S."/>
            <person name="Strong C."/>
            <person name="Du F."/>
            <person name="Carter J."/>
            <person name="Kremizki C."/>
            <person name="Layman D."/>
            <person name="Leonard S."/>
            <person name="Sun H."/>
            <person name="Fulton L."/>
            <person name="Nash W."/>
            <person name="Miner T."/>
            <person name="Minx P."/>
            <person name="Delehaunty K."/>
            <person name="Fronick C."/>
            <person name="Magrini V."/>
            <person name="Nhan M."/>
            <person name="Warren W."/>
            <person name="Florea L."/>
            <person name="Spieth J."/>
            <person name="Wilson R.K."/>
        </authorList>
    </citation>
    <scope>NUCLEOTIDE SEQUENCE [LARGE SCALE GENOMIC DNA]</scope>
    <source>
        <strain>ATCC 9150 / SARB42</strain>
    </source>
</reference>
<sequence>MDTELLKTFLEVSRTRHFGRAAEALYLTQSAVSFRIRQLENQLGVNLFTRHRNNIRLTTAGEKLLPYAETLMNTWQAARKEVAHTSRHNEFSIGASASLWECMLNAWLGRLYQLQEPQSGLQFEARIAQRQSLVKQLHERQLDLLITTEAPKMDEFSSQLLGHFTLALYCSSPARKKSELNYLRLEWGPDFQQHETGLIAADEVPVLTTSSAELARQQLSALNGCSWLPVNWANEKGGLHTVADSATLSRPLYAIWLQNSDKYSLICDLLKTDVLDEQ</sequence>
<comment type="function">
    <text evidence="1">Negatively regulates the transcription of the flagellar master operon flhDC by binding to the upstream region of the operon.</text>
</comment>
<comment type="similarity">
    <text evidence="2">Belongs to the LysR transcriptional regulatory family.</text>
</comment>
<feature type="chain" id="PRO_1000066896" description="HTH-type transcriptional regulator HdfR">
    <location>
        <begin position="1"/>
        <end position="278"/>
    </location>
</feature>
<feature type="domain" description="HTH lysR-type" evidence="1">
    <location>
        <begin position="1"/>
        <end position="58"/>
    </location>
</feature>
<feature type="DNA-binding region" description="H-T-H motif" evidence="1">
    <location>
        <begin position="18"/>
        <end position="37"/>
    </location>
</feature>
<protein>
    <recommendedName>
        <fullName evidence="1">HTH-type transcriptional regulator HdfR</fullName>
    </recommendedName>
    <alternativeName>
        <fullName evidence="1">H-NS-dependent flhDC regulator</fullName>
    </alternativeName>
</protein>
<organism>
    <name type="scientific">Salmonella paratyphi A (strain ATCC 9150 / SARB42)</name>
    <dbReference type="NCBI Taxonomy" id="295319"/>
    <lineage>
        <taxon>Bacteria</taxon>
        <taxon>Pseudomonadati</taxon>
        <taxon>Pseudomonadota</taxon>
        <taxon>Gammaproteobacteria</taxon>
        <taxon>Enterobacterales</taxon>
        <taxon>Enterobacteriaceae</taxon>
        <taxon>Salmonella</taxon>
    </lineage>
</organism>
<accession>Q5PJZ0</accession>